<comment type="function">
    <text evidence="1">Part of a membrane-bound complex that couples electron transfer with translocation of ions across the membrane.</text>
</comment>
<comment type="cofactor">
    <cofactor evidence="1">
        <name>FMN</name>
        <dbReference type="ChEBI" id="CHEBI:58210"/>
    </cofactor>
</comment>
<comment type="subunit">
    <text evidence="1">The complex is composed of six subunits: RnfA, RnfB, RnfC, RnfD, RnfE and RnfG.</text>
</comment>
<comment type="subcellular location">
    <subcellularLocation>
        <location evidence="1">Cell inner membrane</location>
        <topology evidence="1">Multi-pass membrane protein</topology>
    </subcellularLocation>
</comment>
<comment type="similarity">
    <text evidence="1">Belongs to the NqrB/RnfD family.</text>
</comment>
<sequence>MFKMVSSPHTHSGKLTAHIMLWVILAMMPAFFTQIYYFGFGVVLQSALAIGTAIIAEFIAIKLRGKKPLNYLSDFSVALTALILAMAIPPYAPYWVIIIGTLCAVLLGKQVYGGLGQNPFNPAMIGYVILLISFPLQMTTWMPPINLLQEPPTFSDAFSLIFSGLTTDGFTLSQLTHNIDGITQATPLDSAKIFYKSHTQLSDFYELIKLPIFMGNGTDFAQGWWQINVAFLAGGIFLILKRIIHWQIPVAMLVTFFCLATATAFTGFTHLSAISQLVSGAMMFGAFFIATDPVTASITPRGKIIFGALVGLFVYLIRYHGNYPDGVAFAILLSNICVPLIDHYTRPRVSGYPTKGRK</sequence>
<protein>
    <recommendedName>
        <fullName evidence="1">Ion-translocating oxidoreductase complex subunit D</fullName>
        <ecNumber evidence="1">7.-.-.-</ecNumber>
    </recommendedName>
    <alternativeName>
        <fullName evidence="1">Rnf electron transport complex subunit D</fullName>
    </alternativeName>
</protein>
<feature type="chain" id="PRO_1000013626" description="Ion-translocating oxidoreductase complex subunit D">
    <location>
        <begin position="1"/>
        <end position="358"/>
    </location>
</feature>
<feature type="transmembrane region" description="Helical" evidence="1">
    <location>
        <begin position="19"/>
        <end position="39"/>
    </location>
</feature>
<feature type="transmembrane region" description="Helical" evidence="1">
    <location>
        <begin position="41"/>
        <end position="61"/>
    </location>
</feature>
<feature type="transmembrane region" description="Helical" evidence="1">
    <location>
        <begin position="79"/>
        <end position="99"/>
    </location>
</feature>
<feature type="transmembrane region" description="Helical" evidence="1">
    <location>
        <begin position="125"/>
        <end position="145"/>
    </location>
</feature>
<feature type="transmembrane region" description="Helical" evidence="1">
    <location>
        <begin position="220"/>
        <end position="240"/>
    </location>
</feature>
<feature type="transmembrane region" description="Helical" evidence="1">
    <location>
        <begin position="248"/>
        <end position="268"/>
    </location>
</feature>
<feature type="transmembrane region" description="Helical" evidence="1">
    <location>
        <begin position="271"/>
        <end position="291"/>
    </location>
</feature>
<feature type="transmembrane region" description="Helical" evidence="1">
    <location>
        <begin position="297"/>
        <end position="317"/>
    </location>
</feature>
<feature type="transmembrane region" description="Helical" evidence="1">
    <location>
        <begin position="321"/>
        <end position="341"/>
    </location>
</feature>
<feature type="modified residue" description="FMN phosphoryl threonine" evidence="1">
    <location>
        <position position="186"/>
    </location>
</feature>
<reference key="1">
    <citation type="journal article" date="2007" name="Genome Biol.">
        <title>Characterization and modeling of the Haemophilus influenzae core and supragenomes based on the complete genomic sequences of Rd and 12 clinical nontypeable strains.</title>
        <authorList>
            <person name="Hogg J.S."/>
            <person name="Hu F.Z."/>
            <person name="Janto B."/>
            <person name="Boissy R."/>
            <person name="Hayes J."/>
            <person name="Keefe R."/>
            <person name="Post J.C."/>
            <person name="Ehrlich G.D."/>
        </authorList>
    </citation>
    <scope>NUCLEOTIDE SEQUENCE [LARGE SCALE GENOMIC DNA]</scope>
    <source>
        <strain>PittGG</strain>
    </source>
</reference>
<proteinExistence type="inferred from homology"/>
<keyword id="KW-0997">Cell inner membrane</keyword>
<keyword id="KW-1003">Cell membrane</keyword>
<keyword id="KW-0249">Electron transport</keyword>
<keyword id="KW-0285">Flavoprotein</keyword>
<keyword id="KW-0288">FMN</keyword>
<keyword id="KW-0472">Membrane</keyword>
<keyword id="KW-0597">Phosphoprotein</keyword>
<keyword id="KW-1278">Translocase</keyword>
<keyword id="KW-0812">Transmembrane</keyword>
<keyword id="KW-1133">Transmembrane helix</keyword>
<keyword id="KW-0813">Transport</keyword>
<name>RNFD_HAEIG</name>
<organism>
    <name type="scientific">Haemophilus influenzae (strain PittGG)</name>
    <dbReference type="NCBI Taxonomy" id="374931"/>
    <lineage>
        <taxon>Bacteria</taxon>
        <taxon>Pseudomonadati</taxon>
        <taxon>Pseudomonadota</taxon>
        <taxon>Gammaproteobacteria</taxon>
        <taxon>Pasteurellales</taxon>
        <taxon>Pasteurellaceae</taxon>
        <taxon>Haemophilus</taxon>
    </lineage>
</organism>
<evidence type="ECO:0000255" key="1">
    <source>
        <dbReference type="HAMAP-Rule" id="MF_00462"/>
    </source>
</evidence>
<dbReference type="EC" id="7.-.-.-" evidence="1"/>
<dbReference type="EMBL" id="CP000672">
    <property type="protein sequence ID" value="ABQ99478.1"/>
    <property type="molecule type" value="Genomic_DNA"/>
</dbReference>
<dbReference type="SMR" id="A5UFC3"/>
<dbReference type="KEGG" id="hiq:CGSHiGG_02170"/>
<dbReference type="HOGENOM" id="CLU_042020_0_0_6"/>
<dbReference type="Proteomes" id="UP000001990">
    <property type="component" value="Chromosome"/>
</dbReference>
<dbReference type="GO" id="GO:0005886">
    <property type="term" value="C:plasma membrane"/>
    <property type="evidence" value="ECO:0007669"/>
    <property type="project" value="UniProtKB-SubCell"/>
</dbReference>
<dbReference type="GO" id="GO:0022900">
    <property type="term" value="P:electron transport chain"/>
    <property type="evidence" value="ECO:0007669"/>
    <property type="project" value="UniProtKB-UniRule"/>
</dbReference>
<dbReference type="GO" id="GO:0055085">
    <property type="term" value="P:transmembrane transport"/>
    <property type="evidence" value="ECO:0007669"/>
    <property type="project" value="InterPro"/>
</dbReference>
<dbReference type="HAMAP" id="MF_00462">
    <property type="entry name" value="RsxD_RnfD"/>
    <property type="match status" value="1"/>
</dbReference>
<dbReference type="InterPro" id="IPR004338">
    <property type="entry name" value="NqrB/RnfD"/>
</dbReference>
<dbReference type="InterPro" id="IPR011303">
    <property type="entry name" value="RnfD_bac"/>
</dbReference>
<dbReference type="NCBIfam" id="NF002011">
    <property type="entry name" value="PRK00816.1"/>
    <property type="match status" value="1"/>
</dbReference>
<dbReference type="NCBIfam" id="TIGR01946">
    <property type="entry name" value="rnfD"/>
    <property type="match status" value="1"/>
</dbReference>
<dbReference type="PANTHER" id="PTHR30578">
    <property type="entry name" value="ELECTRON TRANSPORT COMPLEX PROTEIN RNFD"/>
    <property type="match status" value="1"/>
</dbReference>
<dbReference type="PANTHER" id="PTHR30578:SF0">
    <property type="entry name" value="ION-TRANSLOCATING OXIDOREDUCTASE COMPLEX SUBUNIT D"/>
    <property type="match status" value="1"/>
</dbReference>
<dbReference type="Pfam" id="PF03116">
    <property type="entry name" value="NQR2_RnfD_RnfE"/>
    <property type="match status" value="1"/>
</dbReference>
<accession>A5UFC3</accession>
<gene>
    <name evidence="1" type="primary">rnfD</name>
    <name type="ordered locus">CGSHiGG_02170</name>
</gene>